<name>MYB44_ARATH</name>
<sequence length="305" mass="33268">MADRIKGPWSPEEDEQLRRLVVKYGPRNWTVISKSIPGRSGKSCRLRWCNQLSPQVEHRPFSAEEDETIARAHAQFGNKWATIARLLNGRTDNAVKNHWNSTLKRKCGGYDHRGYDGSEDHRPVKRSVSAGSPPVVTGLYMSPGSPTGSDVSDSSTIPILPSVELFKPVPRPGAVVLPLPIETSSSSDDPPTSLSLSLPGADVSEESNRSHESTNINNTTSSRHNHNNTVSFMPFSGGFRGAIEEMGKSFPGNGGEFMAVVQEMIKAEVRSYMTEMQRNNGGGFVGGFIDNGMIPMSQIGVGRIE</sequence>
<feature type="chain" id="PRO_0000344526" description="Transcription factor MYB44">
    <location>
        <begin position="1"/>
        <end position="305"/>
    </location>
</feature>
<feature type="domain" description="HTH myb-type 1" evidence="1">
    <location>
        <begin position="1"/>
        <end position="56"/>
    </location>
</feature>
<feature type="domain" description="HTH myb-type 2" evidence="1">
    <location>
        <begin position="58"/>
        <end position="107"/>
    </location>
</feature>
<feature type="DNA-binding region" description="H-T-H motif" evidence="1">
    <location>
        <begin position="29"/>
        <end position="52"/>
    </location>
</feature>
<feature type="DNA-binding region" description="H-T-H motif" evidence="1">
    <location>
        <begin position="80"/>
        <end position="103"/>
    </location>
</feature>
<feature type="region of interest" description="Disordered" evidence="2">
    <location>
        <begin position="116"/>
        <end position="155"/>
    </location>
</feature>
<feature type="region of interest" description="Disordered" evidence="2">
    <location>
        <begin position="180"/>
        <end position="229"/>
    </location>
</feature>
<feature type="compositionally biased region" description="Polar residues" evidence="2">
    <location>
        <begin position="144"/>
        <end position="155"/>
    </location>
</feature>
<feature type="compositionally biased region" description="Low complexity" evidence="2">
    <location>
        <begin position="183"/>
        <end position="199"/>
    </location>
</feature>
<feature type="compositionally biased region" description="Low complexity" evidence="2">
    <location>
        <begin position="213"/>
        <end position="222"/>
    </location>
</feature>
<feature type="sequence conflict" description="In Ref. 1; CAA90809." evidence="11" ref="1">
    <original>S</original>
    <variation>F</variation>
    <location>
        <position position="186"/>
    </location>
</feature>
<feature type="sequence conflict" description="In Ref. 5; AAL31250/AAK96490." evidence="11" ref="5">
    <original>V</original>
    <variation>L</variation>
    <location>
        <position position="261"/>
    </location>
</feature>
<reference key="1">
    <citation type="journal article" date="1998" name="Plant Mol. Biol.">
        <title>Two novel MYB homologues with changed expression in late embryogenesis-defective Arabidopsis mutants.</title>
        <authorList>
            <person name="Kirik V."/>
            <person name="Koelle K."/>
            <person name="Misera S."/>
            <person name="Baeumlein H."/>
        </authorList>
    </citation>
    <scope>NUCLEOTIDE SEQUENCE [MRNA]</scope>
    <scope>FUNCTION</scope>
    <scope>TISSUE SPECIFICITY</scope>
    <scope>DEVELOPMENTAL STAGE</scope>
    <source>
        <strain>cv. Landsberg erecta</strain>
        <tissue>Silique</tissue>
    </source>
</reference>
<reference key="2">
    <citation type="submission" date="2004-01" db="EMBL/GenBank/DDBJ databases">
        <title>The MYB transcription factor family in Arabidopsis: a genome-wide cloning and expression pattern analysis.</title>
        <authorList>
            <person name="Qu L.-J."/>
            <person name="Gu H."/>
        </authorList>
    </citation>
    <scope>NUCLEOTIDE SEQUENCE [MRNA]</scope>
</reference>
<reference key="3">
    <citation type="journal article" date="1997" name="DNA Res.">
        <title>Structural analysis of Arabidopsis thaliana chromosome 5. III. Sequence features of the regions of 1,191,918 bp covered by seventeen physically assigned P1 clones.</title>
        <authorList>
            <person name="Nakamura Y."/>
            <person name="Sato S."/>
            <person name="Kaneko T."/>
            <person name="Kotani H."/>
            <person name="Asamizu E."/>
            <person name="Miyajima N."/>
            <person name="Tabata S."/>
        </authorList>
    </citation>
    <scope>NUCLEOTIDE SEQUENCE [LARGE SCALE GENOMIC DNA]</scope>
    <source>
        <strain>cv. Columbia</strain>
    </source>
</reference>
<reference key="4">
    <citation type="journal article" date="2017" name="Plant J.">
        <title>Araport11: a complete reannotation of the Arabidopsis thaliana reference genome.</title>
        <authorList>
            <person name="Cheng C.Y."/>
            <person name="Krishnakumar V."/>
            <person name="Chan A.P."/>
            <person name="Thibaud-Nissen F."/>
            <person name="Schobel S."/>
            <person name="Town C.D."/>
        </authorList>
    </citation>
    <scope>GENOME REANNOTATION</scope>
    <source>
        <strain>cv. Columbia</strain>
    </source>
</reference>
<reference key="5">
    <citation type="journal article" date="2003" name="Science">
        <title>Empirical analysis of transcriptional activity in the Arabidopsis genome.</title>
        <authorList>
            <person name="Yamada K."/>
            <person name="Lim J."/>
            <person name="Dale J.M."/>
            <person name="Chen H."/>
            <person name="Shinn P."/>
            <person name="Palm C.J."/>
            <person name="Southwick A.M."/>
            <person name="Wu H.C."/>
            <person name="Kim C.J."/>
            <person name="Nguyen M."/>
            <person name="Pham P.K."/>
            <person name="Cheuk R.F."/>
            <person name="Karlin-Newmann G."/>
            <person name="Liu S.X."/>
            <person name="Lam B."/>
            <person name="Sakano H."/>
            <person name="Wu T."/>
            <person name="Yu G."/>
            <person name="Miranda M."/>
            <person name="Quach H.L."/>
            <person name="Tripp M."/>
            <person name="Chang C.H."/>
            <person name="Lee J.M."/>
            <person name="Toriumi M.J."/>
            <person name="Chan M.M."/>
            <person name="Tang C.C."/>
            <person name="Onodera C.S."/>
            <person name="Deng J.M."/>
            <person name="Akiyama K."/>
            <person name="Ansari Y."/>
            <person name="Arakawa T."/>
            <person name="Banh J."/>
            <person name="Banno F."/>
            <person name="Bowser L."/>
            <person name="Brooks S.Y."/>
            <person name="Carninci P."/>
            <person name="Chao Q."/>
            <person name="Choy N."/>
            <person name="Enju A."/>
            <person name="Goldsmith A.D."/>
            <person name="Gurjal M."/>
            <person name="Hansen N.F."/>
            <person name="Hayashizaki Y."/>
            <person name="Johnson-Hopson C."/>
            <person name="Hsuan V.W."/>
            <person name="Iida K."/>
            <person name="Karnes M."/>
            <person name="Khan S."/>
            <person name="Koesema E."/>
            <person name="Ishida J."/>
            <person name="Jiang P.X."/>
            <person name="Jones T."/>
            <person name="Kawai J."/>
            <person name="Kamiya A."/>
            <person name="Meyers C."/>
            <person name="Nakajima M."/>
            <person name="Narusaka M."/>
            <person name="Seki M."/>
            <person name="Sakurai T."/>
            <person name="Satou M."/>
            <person name="Tamse R."/>
            <person name="Vaysberg M."/>
            <person name="Wallender E.K."/>
            <person name="Wong C."/>
            <person name="Yamamura Y."/>
            <person name="Yuan S."/>
            <person name="Shinozaki K."/>
            <person name="Davis R.W."/>
            <person name="Theologis A."/>
            <person name="Ecker J.R."/>
        </authorList>
    </citation>
    <scope>NUCLEOTIDE SEQUENCE [LARGE SCALE MRNA]</scope>
    <source>
        <strain>cv. Columbia</strain>
    </source>
</reference>
<reference key="6">
    <citation type="submission" date="2002-03" db="EMBL/GenBank/DDBJ databases">
        <title>Full-length cDNA from Arabidopsis thaliana.</title>
        <authorList>
            <person name="Brover V.V."/>
            <person name="Troukhan M.E."/>
            <person name="Alexandrov N.A."/>
            <person name="Lu Y.-P."/>
            <person name="Flavell R.B."/>
            <person name="Feldmann K.A."/>
        </authorList>
    </citation>
    <scope>NUCLEOTIDE SEQUENCE [LARGE SCALE MRNA]</scope>
</reference>
<reference key="7">
    <citation type="submission" date="1997-05" db="EMBL/GenBank/DDBJ databases">
        <title>One hundred R2R3-MYB genes in the genome of Arabidopsis thaliana.</title>
        <authorList>
            <person name="Romero I."/>
            <person name="Fuertes A."/>
            <person name="Benito M.J."/>
            <person name="Malpica J."/>
            <person name="Leyva A."/>
            <person name="Paz-Ares J."/>
        </authorList>
    </citation>
    <scope>NUCLEOTIDE SEQUENCE [MRNA] OF 46-90</scope>
    <source>
        <strain>cv. Landsberg erecta</strain>
    </source>
</reference>
<reference key="8">
    <citation type="journal article" date="2001" name="Curr. Opin. Plant Biol.">
        <title>The R2R3-MYB gene family in Arabidopsis thaliana.</title>
        <authorList>
            <person name="Stracke R."/>
            <person name="Werber M."/>
            <person name="Weisshaar B."/>
        </authorList>
    </citation>
    <scope>GENE FAMILY</scope>
    <scope>NOMENCLATURE</scope>
</reference>
<reference key="9">
    <citation type="journal article" date="2006" name="Plant Mol. Biol.">
        <title>The MYB transcription factor superfamily of Arabidopsis: expression analysis and phylogenetic comparison with the rice MYB family.</title>
        <authorList>
            <person name="Chen Y."/>
            <person name="Yang X."/>
            <person name="He K."/>
            <person name="Liu M."/>
            <person name="Li J."/>
            <person name="Gao Z."/>
            <person name="Lin Z."/>
            <person name="Zhang Y."/>
            <person name="Wang X."/>
            <person name="Qiu X."/>
            <person name="Shen Y."/>
            <person name="Zhang L."/>
            <person name="Deng X."/>
            <person name="Luo J."/>
            <person name="Deng X.-W."/>
            <person name="Chen Z."/>
            <person name="Gu H."/>
            <person name="Qu L.-J."/>
        </authorList>
    </citation>
    <scope>GENE FAMILY</scope>
    <scope>INDUCTION</scope>
</reference>
<reference key="10">
    <citation type="journal article" date="2008" name="Plant Physiol.">
        <title>Overexpression of AtMYB44 enhances stomatal closure to confer abiotic stress tolerance in transgenic Arabidopsis.</title>
        <authorList>
            <person name="Jung C."/>
            <person name="Seo J.S."/>
            <person name="Han S.W."/>
            <person name="Koo Y.J."/>
            <person name="Kim C.H."/>
            <person name="Song S.I."/>
            <person name="Nahm B.H."/>
            <person name="Choi Y.D."/>
            <person name="Cheong J.-J."/>
        </authorList>
    </citation>
    <scope>FUNCTION</scope>
    <scope>SUBCELLULAR LOCATION</scope>
    <scope>TISSUE SPECIFICITY</scope>
    <scope>INDUCTION</scope>
</reference>
<reference key="11">
    <citation type="journal article" date="2013" name="Plant J.">
        <title>AtMYB44 regulates WRKY70 expression and modulates antagonistic interaction between salicylic acid and jasmonic acid signaling.</title>
        <authorList>
            <person name="Shim J.S."/>
            <person name="Jung C."/>
            <person name="Lee S."/>
            <person name="Min K."/>
            <person name="Lee Y.-W."/>
            <person name="Choi Y."/>
            <person name="Lee J.S."/>
            <person name="Song J.T."/>
            <person name="Kim J.-K."/>
            <person name="Choi Y.D."/>
        </authorList>
    </citation>
    <scope>FUNCTION</scope>
    <scope>DISRUPTION PHENOTYPE</scope>
    <scope>INDUCTION BY JASMONATE AND SALICYLIC ACID</scope>
    <source>
        <strain>cv. Columbia</strain>
    </source>
</reference>
<reference key="12">
    <citation type="journal article" date="2013" name="Plant Signal. Behav.">
        <title>Direct regulation of WRKY70 by AtMYB44 in plant defense responses.</title>
        <authorList>
            <person name="Shim J.S."/>
            <person name="Choi Y.D."/>
        </authorList>
    </citation>
    <scope>FUNCTION</scope>
</reference>
<reference key="13">
    <citation type="journal article" date="2014" name="Sci. Signal.">
        <title>The ABA receptor PYL8 promotes lateral root growth by enhancing MYB77-dependent transcription of auxin-responsive genes.</title>
        <authorList>
            <person name="Zhao Y."/>
            <person name="Xing L."/>
            <person name="Wang X."/>
            <person name="Hou Y.J."/>
            <person name="Gao J."/>
            <person name="Wang P."/>
            <person name="Duan C.G."/>
            <person name="Zhu X."/>
            <person name="Zhu J.K."/>
        </authorList>
    </citation>
    <scope>FUNCTION</scope>
    <scope>INTERACTION WITH PYL8</scope>
</reference>
<proteinExistence type="evidence at protein level"/>
<comment type="function">
    <text evidence="4 5 6 7 8">Transcription factor (PubMed:23067202, PubMed:23603962). Represses the expression of protein phosphatases 2C in response to abscisic acid (ABA). Confers resistance to abiotic stresses dependent of ABA (PubMed:18162593, PubMed:9678577). In response to auxin, activates the transcription of the auxin-responsive gene IAA19. The IAA19 transcription activation by MYB44 is enhanced by direct interaction between MYB44 and PYL8 (PubMed:24894996). Transcriptional activator of WRKY70 by direct binding to its promoter region, especially at 5'-TAACNG-3' and 5'-CNGTTA-3' symmetric motifs (PubMed:23067202, PubMed:23603962). Activates salicylic acid (SA)- mediated defenses and subsequent resistance to biotrophic pathogen P.syringae pv. tomato DC3000, but represses jasmonic acid (JA)-mediated defenses responses against the necrotrophic pathogen A.brassicicola (PubMed:23067202).</text>
</comment>
<comment type="subunit">
    <text evidence="7">Interacts with PYL8.</text>
</comment>
<comment type="interaction">
    <interactant intactId="EBI-15192813">
        <id>Q9FDW1</id>
    </interactant>
    <interactant intactId="EBI-1100737">
        <id>Q8L9Y3</id>
        <label>ARR14</label>
    </interactant>
    <organismsDiffer>false</organismsDiffer>
    <experiments>3</experiments>
</comment>
<comment type="interaction">
    <interactant intactId="EBI-15192813">
        <id>Q9FDW1</id>
    </interactant>
    <interactant intactId="EBI-4459215">
        <id>Q9FMP4</id>
        <label>At5g12190</label>
    </interactant>
    <organismsDiffer>false</organismsDiffer>
    <experiments>3</experiments>
</comment>
<comment type="interaction">
    <interactant intactId="EBI-15192813">
        <id>Q9FDW1</id>
    </interactant>
    <interactant intactId="EBI-25517863">
        <id>Q9SGS4</id>
        <label>CDSP32</label>
    </interactant>
    <organismsDiffer>false</organismsDiffer>
    <experiments>3</experiments>
</comment>
<comment type="interaction">
    <interactant intactId="EBI-15192813">
        <id>Q9FDW1</id>
    </interactant>
    <interactant intactId="EBI-25516910">
        <id>Q8LPI7</id>
        <label>CKL4</label>
    </interactant>
    <organismsDiffer>false</organismsDiffer>
    <experiments>3</experiments>
</comment>
<comment type="interaction">
    <interactant intactId="EBI-15192813">
        <id>Q9FDW1</id>
    </interactant>
    <interactant intactId="EBI-15191747">
        <id>Q9SFV2</id>
        <label>FHA2</label>
    </interactant>
    <organismsDiffer>false</organismsDiffer>
    <experiments>3</experiments>
</comment>
<comment type="interaction">
    <interactant intactId="EBI-15192813">
        <id>Q9FDW1</id>
    </interactant>
    <interactant intactId="EBI-4465639">
        <id>Q84JZ6</id>
        <label>MORF3</label>
    </interactant>
    <organismsDiffer>false</organismsDiffer>
    <experiments>3</experiments>
</comment>
<comment type="interaction">
    <interactant intactId="EBI-15192813">
        <id>Q9FDW1</id>
    </interactant>
    <interactant intactId="EBI-15192813">
        <id>Q9FDW1</id>
        <label>MYB44</label>
    </interactant>
    <organismsDiffer>false</organismsDiffer>
    <experiments>7</experiments>
</comment>
<comment type="interaction">
    <interactant intactId="EBI-15192813">
        <id>Q9FDW1</id>
    </interactant>
    <interactant intactId="EBI-1238013">
        <id>O22179</id>
        <label>MYB70</label>
    </interactant>
    <organismsDiffer>false</organismsDiffer>
    <experiments>5</experiments>
</comment>
<comment type="interaction">
    <interactant intactId="EBI-15192813">
        <id>Q9FDW1</id>
    </interactant>
    <interactant intactId="EBI-25506855">
        <id>O23160</id>
        <label>MYB73</label>
    </interactant>
    <organismsDiffer>false</organismsDiffer>
    <experiments>5</experiments>
</comment>
<comment type="interaction">
    <interactant intactId="EBI-15192813">
        <id>Q9FDW1</id>
    </interactant>
    <interactant intactId="EBI-2429535">
        <id>Q9FGM1</id>
        <label>PYL8</label>
    </interactant>
    <organismsDiffer>false</organismsDiffer>
    <experiments>5</experiments>
</comment>
<comment type="interaction">
    <interactant intactId="EBI-15192813">
        <id>Q9FDW1</id>
    </interactant>
    <interactant intactId="EBI-395803">
        <id>Q9XGN1</id>
        <label>TTG1</label>
    </interactant>
    <organismsDiffer>false</organismsDiffer>
    <experiments>3</experiments>
</comment>
<comment type="interaction">
    <interactant intactId="EBI-15192813">
        <id>Q9FDW1</id>
    </interactant>
    <interactant intactId="EBI-1115657">
        <id>Q9XFB1</id>
        <label>YAB3</label>
    </interactant>
    <organismsDiffer>false</organismsDiffer>
    <experiments>3</experiments>
</comment>
<comment type="subcellular location">
    <subcellularLocation>
        <location evidence="1 4">Nucleus</location>
    </subcellularLocation>
</comment>
<comment type="tissue specificity">
    <text evidence="4 8">Expressed in roots, stems, leaves, inflorescence, and flowers (including stamen, floral nectar, carpel, petal and sepal), mostly in vasculatures and stomata.</text>
</comment>
<comment type="developmental stage">
    <text evidence="8">Expressed during very late stages of embryogenesis. Later, its expression follows a development dependent gradient in successive leaves.</text>
</comment>
<comment type="induction">
    <text evidence="3 4 5">By drought, cold, high salinity, cadmium (CdCl(2)), salicylic acid (SA), jasmonate (JA), ethylene, gibberellic acid (GA), and ABA (PubMed:16463103, PubMed:18162593, PubMed:23067202). The induction by JA is COI1-dependent (PubMed:23067202).</text>
</comment>
<comment type="disruption phenotype">
    <text evidence="5">Increased defense responses against the necrotrophic pathogen A.brassicicola. Down-regulation of salicylic acid (SA)- mediated WRKY70 and PR genes expression, leading to reduced resistance to the biotrophic pathogen P.syringae pv. tomato DC3000.</text>
</comment>
<accession>Q9FDW1</accession>
<accession>Q39154</accession>
<accession>Q8LBC5</accession>
<accession>Q941B3</accession>
<accession>Q9SAM4</accession>
<evidence type="ECO:0000255" key="1">
    <source>
        <dbReference type="PROSITE-ProRule" id="PRU00625"/>
    </source>
</evidence>
<evidence type="ECO:0000256" key="2">
    <source>
        <dbReference type="SAM" id="MobiDB-lite"/>
    </source>
</evidence>
<evidence type="ECO:0000269" key="3">
    <source>
    </source>
</evidence>
<evidence type="ECO:0000269" key="4">
    <source>
    </source>
</evidence>
<evidence type="ECO:0000269" key="5">
    <source>
    </source>
</evidence>
<evidence type="ECO:0000269" key="6">
    <source>
    </source>
</evidence>
<evidence type="ECO:0000269" key="7">
    <source>
    </source>
</evidence>
<evidence type="ECO:0000269" key="8">
    <source>
    </source>
</evidence>
<evidence type="ECO:0000303" key="9">
    <source>
    </source>
</evidence>
<evidence type="ECO:0000303" key="10">
    <source>
    </source>
</evidence>
<evidence type="ECO:0000305" key="11"/>
<evidence type="ECO:0000312" key="12">
    <source>
        <dbReference type="Araport" id="AT5G67300"/>
    </source>
</evidence>
<evidence type="ECO:0000312" key="13">
    <source>
        <dbReference type="EMBL" id="BAB09015.1"/>
    </source>
</evidence>
<keyword id="KW-0938">Abscisic acid signaling pathway</keyword>
<keyword id="KW-0010">Activator</keyword>
<keyword id="KW-0238">DNA-binding</keyword>
<keyword id="KW-1184">Jasmonic acid signaling pathway</keyword>
<keyword id="KW-0539">Nucleus</keyword>
<keyword id="KW-0611">Plant defense</keyword>
<keyword id="KW-1185">Reference proteome</keyword>
<keyword id="KW-0677">Repeat</keyword>
<keyword id="KW-0804">Transcription</keyword>
<keyword id="KW-0805">Transcription regulation</keyword>
<dbReference type="EMBL" id="Z54136">
    <property type="protein sequence ID" value="CAA90809.1"/>
    <property type="molecule type" value="mRNA"/>
</dbReference>
<dbReference type="EMBL" id="AY519648">
    <property type="protein sequence ID" value="AAS10118.1"/>
    <property type="molecule type" value="mRNA"/>
</dbReference>
<dbReference type="EMBL" id="AB007645">
    <property type="protein sequence ID" value="BAB09015.1"/>
    <property type="molecule type" value="Genomic_DNA"/>
</dbReference>
<dbReference type="EMBL" id="CP002688">
    <property type="protein sequence ID" value="AED98326.1"/>
    <property type="molecule type" value="Genomic_DNA"/>
</dbReference>
<dbReference type="EMBL" id="AF326877">
    <property type="protein sequence ID" value="AAG41459.1"/>
    <property type="molecule type" value="mRNA"/>
</dbReference>
<dbReference type="EMBL" id="AF339698">
    <property type="protein sequence ID" value="AAK00380.1"/>
    <property type="molecule type" value="mRNA"/>
</dbReference>
<dbReference type="EMBL" id="AY052297">
    <property type="protein sequence ID" value="AAK96490.1"/>
    <property type="molecule type" value="mRNA"/>
</dbReference>
<dbReference type="EMBL" id="AY061923">
    <property type="protein sequence ID" value="AAL31250.1"/>
    <property type="molecule type" value="mRNA"/>
</dbReference>
<dbReference type="EMBL" id="AY087295">
    <property type="protein sequence ID" value="AAM64847.1"/>
    <property type="molecule type" value="mRNA"/>
</dbReference>
<dbReference type="EMBL" id="Z95768">
    <property type="protein sequence ID" value="CAB09200.1"/>
    <property type="molecule type" value="mRNA"/>
</dbReference>
<dbReference type="PIR" id="S71284">
    <property type="entry name" value="S71284"/>
</dbReference>
<dbReference type="RefSeq" id="NP_201531.1">
    <property type="nucleotide sequence ID" value="NM_126130.2"/>
</dbReference>
<dbReference type="SMR" id="Q9FDW1"/>
<dbReference type="BioGRID" id="22107">
    <property type="interactions" value="28"/>
</dbReference>
<dbReference type="FunCoup" id="Q9FDW1">
    <property type="interactions" value="3"/>
</dbReference>
<dbReference type="IntAct" id="Q9FDW1">
    <property type="interactions" value="26"/>
</dbReference>
<dbReference type="STRING" id="3702.Q9FDW1"/>
<dbReference type="iPTMnet" id="Q9FDW1"/>
<dbReference type="PaxDb" id="3702-AT5G67300.1"/>
<dbReference type="ProteomicsDB" id="251273"/>
<dbReference type="EnsemblPlants" id="AT5G67300.1">
    <property type="protein sequence ID" value="AT5G67300.1"/>
    <property type="gene ID" value="AT5G67300"/>
</dbReference>
<dbReference type="GeneID" id="836865"/>
<dbReference type="Gramene" id="AT5G67300.1">
    <property type="protein sequence ID" value="AT5G67300.1"/>
    <property type="gene ID" value="AT5G67300"/>
</dbReference>
<dbReference type="KEGG" id="ath:AT5G67300"/>
<dbReference type="Araport" id="AT5G67300"/>
<dbReference type="TAIR" id="AT5G67300">
    <property type="gene designation" value="MYBR1"/>
</dbReference>
<dbReference type="eggNOG" id="KOG0048">
    <property type="taxonomic scope" value="Eukaryota"/>
</dbReference>
<dbReference type="HOGENOM" id="CLU_028567_14_0_1"/>
<dbReference type="InParanoid" id="Q9FDW1"/>
<dbReference type="OMA" id="IPMSQIG"/>
<dbReference type="OrthoDB" id="2143914at2759"/>
<dbReference type="PhylomeDB" id="Q9FDW1"/>
<dbReference type="PRO" id="PR:Q9FDW1"/>
<dbReference type="Proteomes" id="UP000006548">
    <property type="component" value="Chromosome 5"/>
</dbReference>
<dbReference type="ExpressionAtlas" id="Q9FDW1">
    <property type="expression patterns" value="baseline and differential"/>
</dbReference>
<dbReference type="GO" id="GO:0005634">
    <property type="term" value="C:nucleus"/>
    <property type="evidence" value="ECO:0000314"/>
    <property type="project" value="TAIR"/>
</dbReference>
<dbReference type="GO" id="GO:0003700">
    <property type="term" value="F:DNA-binding transcription factor activity"/>
    <property type="evidence" value="ECO:0000314"/>
    <property type="project" value="UniProtKB"/>
</dbReference>
<dbReference type="GO" id="GO:0042802">
    <property type="term" value="F:identical protein binding"/>
    <property type="evidence" value="ECO:0000353"/>
    <property type="project" value="IntAct"/>
</dbReference>
<dbReference type="GO" id="GO:0043565">
    <property type="term" value="F:sequence-specific DNA binding"/>
    <property type="evidence" value="ECO:0000314"/>
    <property type="project" value="UniProtKB"/>
</dbReference>
<dbReference type="GO" id="GO:0000976">
    <property type="term" value="F:transcription cis-regulatory region binding"/>
    <property type="evidence" value="ECO:0000314"/>
    <property type="project" value="UniProtKB"/>
</dbReference>
<dbReference type="GO" id="GO:0009738">
    <property type="term" value="P:abscisic acid-activated signaling pathway"/>
    <property type="evidence" value="ECO:0007669"/>
    <property type="project" value="UniProtKB-KW"/>
</dbReference>
<dbReference type="GO" id="GO:0042742">
    <property type="term" value="P:defense response to bacterium"/>
    <property type="evidence" value="ECO:0000315"/>
    <property type="project" value="TAIR"/>
</dbReference>
<dbReference type="GO" id="GO:0050832">
    <property type="term" value="P:defense response to fungus"/>
    <property type="evidence" value="ECO:0000270"/>
    <property type="project" value="TAIR"/>
</dbReference>
<dbReference type="GO" id="GO:0010929">
    <property type="term" value="P:positive regulation of auxin mediated signaling pathway"/>
    <property type="evidence" value="ECO:0000314"/>
    <property type="project" value="UniProtKB"/>
</dbReference>
<dbReference type="GO" id="GO:1900150">
    <property type="term" value="P:regulation of defense response to fungus"/>
    <property type="evidence" value="ECO:0000315"/>
    <property type="project" value="UniProtKB"/>
</dbReference>
<dbReference type="GO" id="GO:0006355">
    <property type="term" value="P:regulation of DNA-templated transcription"/>
    <property type="evidence" value="ECO:0000314"/>
    <property type="project" value="UniProtKB"/>
</dbReference>
<dbReference type="GO" id="GO:2000022">
    <property type="term" value="P:regulation of jasmonic acid mediated signaling pathway"/>
    <property type="evidence" value="ECO:0000315"/>
    <property type="project" value="TAIR"/>
</dbReference>
<dbReference type="GO" id="GO:2000031">
    <property type="term" value="P:regulation of salicylic acid mediated signaling pathway"/>
    <property type="evidence" value="ECO:0000315"/>
    <property type="project" value="TAIR"/>
</dbReference>
<dbReference type="GO" id="GO:0009737">
    <property type="term" value="P:response to abscisic acid"/>
    <property type="evidence" value="ECO:0000315"/>
    <property type="project" value="TAIR"/>
</dbReference>
<dbReference type="GO" id="GO:0009408">
    <property type="term" value="P:response to heat"/>
    <property type="evidence" value="ECO:0000270"/>
    <property type="project" value="TAIR"/>
</dbReference>
<dbReference type="GO" id="GO:0009753">
    <property type="term" value="P:response to jasmonic acid"/>
    <property type="evidence" value="ECO:0000270"/>
    <property type="project" value="UniProtKB"/>
</dbReference>
<dbReference type="GO" id="GO:0009751">
    <property type="term" value="P:response to salicylic acid"/>
    <property type="evidence" value="ECO:0000270"/>
    <property type="project" value="UniProtKB"/>
</dbReference>
<dbReference type="GO" id="GO:0009651">
    <property type="term" value="P:response to salt stress"/>
    <property type="evidence" value="ECO:0000315"/>
    <property type="project" value="TAIR"/>
</dbReference>
<dbReference type="GO" id="GO:0009414">
    <property type="term" value="P:response to water deprivation"/>
    <property type="evidence" value="ECO:0000270"/>
    <property type="project" value="TAIR"/>
</dbReference>
<dbReference type="CDD" id="cd00167">
    <property type="entry name" value="SANT"/>
    <property type="match status" value="2"/>
</dbReference>
<dbReference type="FunFam" id="1.10.10.60:FF:000060">
    <property type="entry name" value="MYB transcription factor"/>
    <property type="match status" value="1"/>
</dbReference>
<dbReference type="Gene3D" id="1.10.10.60">
    <property type="entry name" value="Homeodomain-like"/>
    <property type="match status" value="2"/>
</dbReference>
<dbReference type="InterPro" id="IPR009057">
    <property type="entry name" value="Homeodomain-like_sf"/>
</dbReference>
<dbReference type="InterPro" id="IPR017930">
    <property type="entry name" value="Myb_dom"/>
</dbReference>
<dbReference type="InterPro" id="IPR050560">
    <property type="entry name" value="MYB_TF"/>
</dbReference>
<dbReference type="InterPro" id="IPR001005">
    <property type="entry name" value="SANT/Myb"/>
</dbReference>
<dbReference type="PANTHER" id="PTHR45614">
    <property type="entry name" value="MYB PROTEIN-RELATED"/>
    <property type="match status" value="1"/>
</dbReference>
<dbReference type="PANTHER" id="PTHR45614:SF190">
    <property type="entry name" value="TRANSCRIPTION FACTOR MYB44"/>
    <property type="match status" value="1"/>
</dbReference>
<dbReference type="Pfam" id="PF00249">
    <property type="entry name" value="Myb_DNA-binding"/>
    <property type="match status" value="2"/>
</dbReference>
<dbReference type="SMART" id="SM00717">
    <property type="entry name" value="SANT"/>
    <property type="match status" value="2"/>
</dbReference>
<dbReference type="SUPFAM" id="SSF46689">
    <property type="entry name" value="Homeodomain-like"/>
    <property type="match status" value="1"/>
</dbReference>
<dbReference type="PROSITE" id="PS51294">
    <property type="entry name" value="HTH_MYB"/>
    <property type="match status" value="2"/>
</dbReference>
<organism>
    <name type="scientific">Arabidopsis thaliana</name>
    <name type="common">Mouse-ear cress</name>
    <dbReference type="NCBI Taxonomy" id="3702"/>
    <lineage>
        <taxon>Eukaryota</taxon>
        <taxon>Viridiplantae</taxon>
        <taxon>Streptophyta</taxon>
        <taxon>Embryophyta</taxon>
        <taxon>Tracheophyta</taxon>
        <taxon>Spermatophyta</taxon>
        <taxon>Magnoliopsida</taxon>
        <taxon>eudicotyledons</taxon>
        <taxon>Gunneridae</taxon>
        <taxon>Pentapetalae</taxon>
        <taxon>rosids</taxon>
        <taxon>malvids</taxon>
        <taxon>Brassicales</taxon>
        <taxon>Brassicaceae</taxon>
        <taxon>Camelineae</taxon>
        <taxon>Arabidopsis</taxon>
    </lineage>
</organism>
<gene>
    <name evidence="9" type="primary">MYB44</name>
    <name evidence="10" type="synonym">MYBR1</name>
    <name evidence="12" type="ordered locus">At5g67300</name>
    <name evidence="13" type="ORF">K8K14.2</name>
</gene>
<protein>
    <recommendedName>
        <fullName evidence="9">Transcription factor MYB44</fullName>
    </recommendedName>
    <alternativeName>
        <fullName evidence="9">Myb-related protein 44</fullName>
        <shortName evidence="9">AtMYB44</shortName>
    </alternativeName>
    <alternativeName>
        <fullName evidence="10">Myb-related protein R1</fullName>
        <shortName evidence="10">AtMYBR1</shortName>
    </alternativeName>
</protein>